<proteinExistence type="evidence at transcript level"/>
<comment type="subcellular location">
    <subcellularLocation>
        <location evidence="6">Secreted</location>
    </subcellularLocation>
</comment>
<comment type="alternative products">
    <event type="alternative splicing"/>
    <isoform>
        <id>Q9LZT5-1</id>
        <name>1</name>
        <sequence type="displayed"/>
    </isoform>
    <isoform>
        <id>Q9LZT5-2</id>
        <name>2</name>
        <sequence type="described" ref="VSP_016536"/>
    </isoform>
</comment>
<comment type="miscellaneous">
    <molecule>Isoform 2</molecule>
    <text evidence="6">May be due to an intron retention.</text>
</comment>
<comment type="similarity">
    <text evidence="6">Belongs to the expansin family. Expansin-like A subfamily.</text>
</comment>
<comment type="online information" name="EXPANSIN homepage">
    <link uri="https://www.dept.psu.edu/biology/groups/expansins/index.htm"/>
</comment>
<organism>
    <name type="scientific">Arabidopsis thaliana</name>
    <name type="common">Mouse-ear cress</name>
    <dbReference type="NCBI Taxonomy" id="3702"/>
    <lineage>
        <taxon>Eukaryota</taxon>
        <taxon>Viridiplantae</taxon>
        <taxon>Streptophyta</taxon>
        <taxon>Embryophyta</taxon>
        <taxon>Tracheophyta</taxon>
        <taxon>Spermatophyta</taxon>
        <taxon>Magnoliopsida</taxon>
        <taxon>eudicotyledons</taxon>
        <taxon>Gunneridae</taxon>
        <taxon>Pentapetalae</taxon>
        <taxon>rosids</taxon>
        <taxon>malvids</taxon>
        <taxon>Brassicales</taxon>
        <taxon>Brassicaceae</taxon>
        <taxon>Camelineae</taxon>
        <taxon>Arabidopsis</taxon>
    </lineage>
</organism>
<dbReference type="EMBL" id="AL162459">
    <property type="protein sequence ID" value="CAB82820.1"/>
    <property type="molecule type" value="Genomic_DNA"/>
</dbReference>
<dbReference type="EMBL" id="CP002686">
    <property type="protein sequence ID" value="AEE78094.1"/>
    <property type="molecule type" value="Genomic_DNA"/>
</dbReference>
<dbReference type="EMBL" id="CP002686">
    <property type="protein sequence ID" value="AEE78095.1"/>
    <property type="molecule type" value="Genomic_DNA"/>
</dbReference>
<dbReference type="EMBL" id="AK117110">
    <property type="protein sequence ID" value="BAC41789.1"/>
    <property type="molecule type" value="mRNA"/>
</dbReference>
<dbReference type="EMBL" id="BT025273">
    <property type="protein sequence ID" value="ABF19026.1"/>
    <property type="molecule type" value="mRNA"/>
</dbReference>
<dbReference type="PIR" id="T47536">
    <property type="entry name" value="T47536"/>
</dbReference>
<dbReference type="RefSeq" id="NP_001030815.1">
    <molecule id="Q9LZT5-1"/>
    <property type="nucleotide sequence ID" value="NM_001035738.3"/>
</dbReference>
<dbReference type="RefSeq" id="NP_190182.2">
    <molecule id="Q9LZT5-2"/>
    <property type="nucleotide sequence ID" value="NM_114465.4"/>
</dbReference>
<dbReference type="SMR" id="Q9LZT5"/>
<dbReference type="FunCoup" id="Q9LZT5">
    <property type="interactions" value="4"/>
</dbReference>
<dbReference type="STRING" id="3702.Q9LZT5"/>
<dbReference type="GlyCosmos" id="Q9LZT5">
    <property type="glycosylation" value="2 sites, No reported glycans"/>
</dbReference>
<dbReference type="GlyGen" id="Q9LZT5">
    <property type="glycosylation" value="2 sites"/>
</dbReference>
<dbReference type="PaxDb" id="3702-AT3G45960.2"/>
<dbReference type="ProteomicsDB" id="222235">
    <molecule id="Q9LZT5-1"/>
</dbReference>
<dbReference type="EnsemblPlants" id="AT3G45960.1">
    <molecule id="Q9LZT5-2"/>
    <property type="protein sequence ID" value="AT3G45960.1"/>
    <property type="gene ID" value="AT3G45960"/>
</dbReference>
<dbReference type="EnsemblPlants" id="AT3G45960.2">
    <molecule id="Q9LZT5-1"/>
    <property type="protein sequence ID" value="AT3G45960.2"/>
    <property type="gene ID" value="AT3G45960"/>
</dbReference>
<dbReference type="GeneID" id="823739"/>
<dbReference type="Gramene" id="AT3G45960.1">
    <molecule id="Q9LZT5-2"/>
    <property type="protein sequence ID" value="AT3G45960.1"/>
    <property type="gene ID" value="AT3G45960"/>
</dbReference>
<dbReference type="Gramene" id="AT3G45960.2">
    <molecule id="Q9LZT5-1"/>
    <property type="protein sequence ID" value="AT3G45960.2"/>
    <property type="gene ID" value="AT3G45960"/>
</dbReference>
<dbReference type="KEGG" id="ath:AT3G45960"/>
<dbReference type="Araport" id="AT3G45960"/>
<dbReference type="TAIR" id="AT3G45960">
    <property type="gene designation" value="EXLA3"/>
</dbReference>
<dbReference type="eggNOG" id="ENOG502QSGZ">
    <property type="taxonomic scope" value="Eukaryota"/>
</dbReference>
<dbReference type="InParanoid" id="Q9LZT5"/>
<dbReference type="OMA" id="RIPCEYS"/>
<dbReference type="PhylomeDB" id="Q9LZT5"/>
<dbReference type="CD-CODE" id="4299E36E">
    <property type="entry name" value="Nucleolus"/>
</dbReference>
<dbReference type="PRO" id="PR:Q9LZT5"/>
<dbReference type="Proteomes" id="UP000006548">
    <property type="component" value="Chromosome 3"/>
</dbReference>
<dbReference type="ExpressionAtlas" id="Q9LZT5">
    <property type="expression patterns" value="baseline and differential"/>
</dbReference>
<dbReference type="GO" id="GO:0005576">
    <property type="term" value="C:extracellular region"/>
    <property type="evidence" value="ECO:0007669"/>
    <property type="project" value="UniProtKB-SubCell"/>
</dbReference>
<dbReference type="GO" id="GO:0009505">
    <property type="term" value="C:plant-type cell wall"/>
    <property type="evidence" value="ECO:0007005"/>
    <property type="project" value="TAIR"/>
</dbReference>
<dbReference type="GO" id="GO:0009506">
    <property type="term" value="C:plasmodesma"/>
    <property type="evidence" value="ECO:0007005"/>
    <property type="project" value="TAIR"/>
</dbReference>
<dbReference type="GO" id="GO:0009653">
    <property type="term" value="P:anatomical structure morphogenesis"/>
    <property type="evidence" value="ECO:0007669"/>
    <property type="project" value="UniProtKB-ARBA"/>
</dbReference>
<dbReference type="GO" id="GO:0009828">
    <property type="term" value="P:plant-type cell wall loosening"/>
    <property type="evidence" value="ECO:0000250"/>
    <property type="project" value="UniProtKB"/>
</dbReference>
<dbReference type="CDD" id="cd22276">
    <property type="entry name" value="DPBB_EXLA_N"/>
    <property type="match status" value="1"/>
</dbReference>
<dbReference type="FunFam" id="2.40.40.10:FF:000006">
    <property type="entry name" value="Expansin-like A2"/>
    <property type="match status" value="1"/>
</dbReference>
<dbReference type="FunFam" id="2.60.40.760:FF:000003">
    <property type="entry name" value="Expansin-like A2"/>
    <property type="match status" value="1"/>
</dbReference>
<dbReference type="Gene3D" id="2.60.40.760">
    <property type="entry name" value="Expansin, cellulose-binding-like domain"/>
    <property type="match status" value="1"/>
</dbReference>
<dbReference type="Gene3D" id="2.40.40.10">
    <property type="entry name" value="RlpA-like domain"/>
    <property type="match status" value="1"/>
</dbReference>
<dbReference type="InterPro" id="IPR007118">
    <property type="entry name" value="Expan_Lol_pI"/>
</dbReference>
<dbReference type="InterPro" id="IPR007112">
    <property type="entry name" value="Expansin/allergen_DPBB_dom"/>
</dbReference>
<dbReference type="InterPro" id="IPR007117">
    <property type="entry name" value="Expansin_CBD"/>
</dbReference>
<dbReference type="InterPro" id="IPR036749">
    <property type="entry name" value="Expansin_CBD_sf"/>
</dbReference>
<dbReference type="InterPro" id="IPR009009">
    <property type="entry name" value="RlpA-like_DPBB"/>
</dbReference>
<dbReference type="InterPro" id="IPR036908">
    <property type="entry name" value="RlpA-like_sf"/>
</dbReference>
<dbReference type="PANTHER" id="PTHR31692">
    <property type="entry name" value="EXPANSIN-B3"/>
    <property type="match status" value="1"/>
</dbReference>
<dbReference type="PANTHER" id="PTHR31692:SF4">
    <property type="entry name" value="EXPANSIN-LIKE A1-RELATED"/>
    <property type="match status" value="1"/>
</dbReference>
<dbReference type="Pfam" id="PF03330">
    <property type="entry name" value="DPBB_1"/>
    <property type="match status" value="1"/>
</dbReference>
<dbReference type="Pfam" id="PF01357">
    <property type="entry name" value="Expansin_C"/>
    <property type="match status" value="1"/>
</dbReference>
<dbReference type="PRINTS" id="PR01225">
    <property type="entry name" value="EXPANSNFAMLY"/>
</dbReference>
<dbReference type="SMART" id="SM00837">
    <property type="entry name" value="DPBB_1"/>
    <property type="match status" value="1"/>
</dbReference>
<dbReference type="SUPFAM" id="SSF50685">
    <property type="entry name" value="Barwin-like endoglucanases"/>
    <property type="match status" value="1"/>
</dbReference>
<dbReference type="SUPFAM" id="SSF49590">
    <property type="entry name" value="PHL pollen allergen"/>
    <property type="match status" value="1"/>
</dbReference>
<dbReference type="PROSITE" id="PS50843">
    <property type="entry name" value="EXPANSIN_CBD"/>
    <property type="match status" value="1"/>
</dbReference>
<dbReference type="PROSITE" id="PS50842">
    <property type="entry name" value="EXPANSIN_EG45"/>
    <property type="match status" value="1"/>
</dbReference>
<keyword id="KW-0025">Alternative splicing</keyword>
<keyword id="KW-0325">Glycoprotein</keyword>
<keyword id="KW-1185">Reference proteome</keyword>
<keyword id="KW-0964">Secreted</keyword>
<keyword id="KW-0732">Signal</keyword>
<accession>Q9LZT5</accession>
<accession>Q1LYV3</accession>
<accession>Q8GZA5</accession>
<evidence type="ECO:0000255" key="1"/>
<evidence type="ECO:0000255" key="2">
    <source>
        <dbReference type="PROSITE-ProRule" id="PRU00078"/>
    </source>
</evidence>
<evidence type="ECO:0000255" key="3">
    <source>
        <dbReference type="PROSITE-ProRule" id="PRU00079"/>
    </source>
</evidence>
<evidence type="ECO:0000303" key="4">
    <source>
    </source>
</evidence>
<evidence type="ECO:0000303" key="5">
    <source ref="4"/>
</evidence>
<evidence type="ECO:0000305" key="6"/>
<protein>
    <recommendedName>
        <fullName>Expansin-like A3</fullName>
        <shortName>At-EXPL3</shortName>
        <shortName>AtEXLA3</shortName>
        <shortName>AtEXPL3</shortName>
    </recommendedName>
    <alternativeName>
        <fullName>Ath-ExpBeta-2.3</fullName>
    </alternativeName>
</protein>
<feature type="signal peptide" evidence="1">
    <location>
        <begin position="1"/>
        <end position="20"/>
    </location>
</feature>
<feature type="chain" id="PRO_0000008714" description="Expansin-like A3">
    <location>
        <begin position="21"/>
        <end position="263"/>
    </location>
</feature>
<feature type="domain" description="Expansin-like EG45" evidence="3">
    <location>
        <begin position="41"/>
        <end position="147"/>
    </location>
</feature>
<feature type="domain" description="Expansin-like CBD" evidence="2">
    <location>
        <begin position="161"/>
        <end position="243"/>
    </location>
</feature>
<feature type="glycosylation site" description="N-linked (GlcNAc...) asparagine" evidence="1">
    <location>
        <position position="99"/>
    </location>
</feature>
<feature type="glycosylation site" description="N-linked (GlcNAc...) asparagine" evidence="1">
    <location>
        <position position="102"/>
    </location>
</feature>
<feature type="splice variant" id="VSP_016536" description="In isoform 2." evidence="4 5">
    <location>
        <begin position="1"/>
        <end position="48"/>
    </location>
</feature>
<sequence>MRSFLYLIVVIFLFSSSVNACDRCLHRSKASYFSSASALSSGACAYGPMATSFFAGHIAAAIPSIYKDGAGCGACFQVRCKNPKLCNSKGTIVMVTDLNTSNQTDLVLSSRAFRAMAKPVVGVDKYLLKQGIVDVEYQRVPCNYGKRNLNVRVEEASKKPNYLAIKLLYQGGQTEVVGIDIAPVGSSQWSYMSRSHGAVWATDKVPTGALQFKFTVTGGYDGKTVWSKRVLPANWNSGRIYDAGVQITDIAQEGCDTCGHIWN</sequence>
<reference key="1">
    <citation type="journal article" date="2000" name="Nature">
        <title>Sequence and analysis of chromosome 3 of the plant Arabidopsis thaliana.</title>
        <authorList>
            <person name="Salanoubat M."/>
            <person name="Lemcke K."/>
            <person name="Rieger M."/>
            <person name="Ansorge W."/>
            <person name="Unseld M."/>
            <person name="Fartmann B."/>
            <person name="Valle G."/>
            <person name="Bloecker H."/>
            <person name="Perez-Alonso M."/>
            <person name="Obermaier B."/>
            <person name="Delseny M."/>
            <person name="Boutry M."/>
            <person name="Grivell L.A."/>
            <person name="Mache R."/>
            <person name="Puigdomenech P."/>
            <person name="De Simone V."/>
            <person name="Choisne N."/>
            <person name="Artiguenave F."/>
            <person name="Robert C."/>
            <person name="Brottier P."/>
            <person name="Wincker P."/>
            <person name="Cattolico L."/>
            <person name="Weissenbach J."/>
            <person name="Saurin W."/>
            <person name="Quetier F."/>
            <person name="Schaefer M."/>
            <person name="Mueller-Auer S."/>
            <person name="Gabel C."/>
            <person name="Fuchs M."/>
            <person name="Benes V."/>
            <person name="Wurmbach E."/>
            <person name="Drzonek H."/>
            <person name="Erfle H."/>
            <person name="Jordan N."/>
            <person name="Bangert S."/>
            <person name="Wiedelmann R."/>
            <person name="Kranz H."/>
            <person name="Voss H."/>
            <person name="Holland R."/>
            <person name="Brandt P."/>
            <person name="Nyakatura G."/>
            <person name="Vezzi A."/>
            <person name="D'Angelo M."/>
            <person name="Pallavicini A."/>
            <person name="Toppo S."/>
            <person name="Simionati B."/>
            <person name="Conrad A."/>
            <person name="Hornischer K."/>
            <person name="Kauer G."/>
            <person name="Loehnert T.-H."/>
            <person name="Nordsiek G."/>
            <person name="Reichelt J."/>
            <person name="Scharfe M."/>
            <person name="Schoen O."/>
            <person name="Bargues M."/>
            <person name="Terol J."/>
            <person name="Climent J."/>
            <person name="Navarro P."/>
            <person name="Collado C."/>
            <person name="Perez-Perez A."/>
            <person name="Ottenwaelder B."/>
            <person name="Duchemin D."/>
            <person name="Cooke R."/>
            <person name="Laudie M."/>
            <person name="Berger-Llauro C."/>
            <person name="Purnelle B."/>
            <person name="Masuy D."/>
            <person name="de Haan M."/>
            <person name="Maarse A.C."/>
            <person name="Alcaraz J.-P."/>
            <person name="Cottet A."/>
            <person name="Casacuberta E."/>
            <person name="Monfort A."/>
            <person name="Argiriou A."/>
            <person name="Flores M."/>
            <person name="Liguori R."/>
            <person name="Vitale D."/>
            <person name="Mannhaupt G."/>
            <person name="Haase D."/>
            <person name="Schoof H."/>
            <person name="Rudd S."/>
            <person name="Zaccaria P."/>
            <person name="Mewes H.-W."/>
            <person name="Mayer K.F.X."/>
            <person name="Kaul S."/>
            <person name="Town C.D."/>
            <person name="Koo H.L."/>
            <person name="Tallon L.J."/>
            <person name="Jenkins J."/>
            <person name="Rooney T."/>
            <person name="Rizzo M."/>
            <person name="Walts A."/>
            <person name="Utterback T."/>
            <person name="Fujii C.Y."/>
            <person name="Shea T.P."/>
            <person name="Creasy T.H."/>
            <person name="Haas B."/>
            <person name="Maiti R."/>
            <person name="Wu D."/>
            <person name="Peterson J."/>
            <person name="Van Aken S."/>
            <person name="Pai G."/>
            <person name="Militscher J."/>
            <person name="Sellers P."/>
            <person name="Gill J.E."/>
            <person name="Feldblyum T.V."/>
            <person name="Preuss D."/>
            <person name="Lin X."/>
            <person name="Nierman W.C."/>
            <person name="Salzberg S.L."/>
            <person name="White O."/>
            <person name="Venter J.C."/>
            <person name="Fraser C.M."/>
            <person name="Kaneko T."/>
            <person name="Nakamura Y."/>
            <person name="Sato S."/>
            <person name="Kato T."/>
            <person name="Asamizu E."/>
            <person name="Sasamoto S."/>
            <person name="Kimura T."/>
            <person name="Idesawa K."/>
            <person name="Kawashima K."/>
            <person name="Kishida Y."/>
            <person name="Kiyokawa C."/>
            <person name="Kohara M."/>
            <person name="Matsumoto M."/>
            <person name="Matsuno A."/>
            <person name="Muraki A."/>
            <person name="Nakayama S."/>
            <person name="Nakazaki N."/>
            <person name="Shinpo S."/>
            <person name="Takeuchi C."/>
            <person name="Wada T."/>
            <person name="Watanabe A."/>
            <person name="Yamada M."/>
            <person name="Yasuda M."/>
            <person name="Tabata S."/>
        </authorList>
    </citation>
    <scope>NUCLEOTIDE SEQUENCE [LARGE SCALE GENOMIC DNA]</scope>
    <source>
        <strain>cv. Columbia</strain>
    </source>
</reference>
<reference key="2">
    <citation type="journal article" date="2017" name="Plant J.">
        <title>Araport11: a complete reannotation of the Arabidopsis thaliana reference genome.</title>
        <authorList>
            <person name="Cheng C.Y."/>
            <person name="Krishnakumar V."/>
            <person name="Chan A.P."/>
            <person name="Thibaud-Nissen F."/>
            <person name="Schobel S."/>
            <person name="Town C.D."/>
        </authorList>
    </citation>
    <scope>GENOME REANNOTATION</scope>
    <source>
        <strain>cv. Columbia</strain>
    </source>
</reference>
<reference key="3">
    <citation type="journal article" date="2002" name="Science">
        <title>Functional annotation of a full-length Arabidopsis cDNA collection.</title>
        <authorList>
            <person name="Seki M."/>
            <person name="Narusaka M."/>
            <person name="Kamiya A."/>
            <person name="Ishida J."/>
            <person name="Satou M."/>
            <person name="Sakurai T."/>
            <person name="Nakajima M."/>
            <person name="Enju A."/>
            <person name="Akiyama K."/>
            <person name="Oono Y."/>
            <person name="Muramatsu M."/>
            <person name="Hayashizaki Y."/>
            <person name="Kawai J."/>
            <person name="Carninci P."/>
            <person name="Itoh M."/>
            <person name="Ishii Y."/>
            <person name="Arakawa T."/>
            <person name="Shibata K."/>
            <person name="Shinagawa A."/>
            <person name="Shinozaki K."/>
        </authorList>
    </citation>
    <scope>NUCLEOTIDE SEQUENCE [LARGE SCALE MRNA] (ISOFORM 2)</scope>
    <source>
        <strain>cv. Columbia</strain>
    </source>
</reference>
<reference key="4">
    <citation type="submission" date="2006-04" db="EMBL/GenBank/DDBJ databases">
        <title>Arabidopsis ORF clones.</title>
        <authorList>
            <person name="Shinn P."/>
            <person name="Chen H."/>
            <person name="Kim C.J."/>
            <person name="Ecker J.R."/>
        </authorList>
    </citation>
    <scope>NUCLEOTIDE SEQUENCE [LARGE SCALE MRNA] (ISOFORM 2)</scope>
    <source>
        <strain>cv. Columbia</strain>
    </source>
</reference>
<reference key="5">
    <citation type="journal article" date="2004" name="Plant Mol. Biol.">
        <title>Nomenclature for members of the expansin superfamily of genes and proteins.</title>
        <authorList>
            <person name="Kende H."/>
            <person name="Bradford K.J."/>
            <person name="Brummell D.A."/>
            <person name="Cho H.-T."/>
            <person name="Cosgrove D.J."/>
            <person name="Fleming A.J."/>
            <person name="Gehring C."/>
            <person name="Lee Y."/>
            <person name="McQueen-Mason S.J."/>
            <person name="Rose J.K.C."/>
            <person name="Voesenek L.A.C."/>
        </authorList>
    </citation>
    <scope>NOMENCLATURE</scope>
</reference>
<gene>
    <name type="primary">EXLA3</name>
    <name type="synonym">EXPL3</name>
    <name type="ordered locus">At3g45960</name>
    <name type="ORF">F16L2_170</name>
</gene>
<name>EXLA3_ARATH</name>